<name>HEM3_STAAT</name>
<reference key="1">
    <citation type="journal article" date="2007" name="BMC Microbiol.">
        <title>Subtle genetic changes enhance virulence of methicillin resistant and sensitive Staphylococcus aureus.</title>
        <authorList>
            <person name="Highlander S.K."/>
            <person name="Hulten K.G."/>
            <person name="Qin X."/>
            <person name="Jiang H."/>
            <person name="Yerrapragada S."/>
            <person name="Mason E.O. Jr."/>
            <person name="Shang Y."/>
            <person name="Williams T.M."/>
            <person name="Fortunov R.M."/>
            <person name="Liu Y."/>
            <person name="Igboeli O."/>
            <person name="Petrosino J."/>
            <person name="Tirumalai M."/>
            <person name="Uzman A."/>
            <person name="Fox G.E."/>
            <person name="Cardenas A.M."/>
            <person name="Muzny D.M."/>
            <person name="Hemphill L."/>
            <person name="Ding Y."/>
            <person name="Dugan S."/>
            <person name="Blyth P.R."/>
            <person name="Buhay C.J."/>
            <person name="Dinh H.H."/>
            <person name="Hawes A.C."/>
            <person name="Holder M."/>
            <person name="Kovar C.L."/>
            <person name="Lee S.L."/>
            <person name="Liu W."/>
            <person name="Nazareth L.V."/>
            <person name="Wang Q."/>
            <person name="Zhou J."/>
            <person name="Kaplan S.L."/>
            <person name="Weinstock G.M."/>
        </authorList>
    </citation>
    <scope>NUCLEOTIDE SEQUENCE [LARGE SCALE GENOMIC DNA]</scope>
    <source>
        <strain>USA300 / TCH1516</strain>
    </source>
</reference>
<protein>
    <recommendedName>
        <fullName evidence="1">Porphobilinogen deaminase</fullName>
        <shortName evidence="1">PBG</shortName>
        <ecNumber evidence="1">2.5.1.61</ecNumber>
    </recommendedName>
    <alternativeName>
        <fullName evidence="1">Hydroxymethylbilane synthase</fullName>
        <shortName evidence="1">HMBS</shortName>
    </alternativeName>
    <alternativeName>
        <fullName evidence="1">Pre-uroporphyrinogen synthase</fullName>
    </alternativeName>
</protein>
<gene>
    <name evidence="1" type="primary">hemC</name>
    <name type="ordered locus">USA300HOU_1662</name>
</gene>
<evidence type="ECO:0000255" key="1">
    <source>
        <dbReference type="HAMAP-Rule" id="MF_00260"/>
    </source>
</evidence>
<comment type="function">
    <text evidence="1">Tetrapolymerization of the monopyrrole PBG into the hydroxymethylbilane pre-uroporphyrinogen in several discrete steps.</text>
</comment>
<comment type="catalytic activity">
    <reaction evidence="1">
        <text>4 porphobilinogen + H2O = hydroxymethylbilane + 4 NH4(+)</text>
        <dbReference type="Rhea" id="RHEA:13185"/>
        <dbReference type="ChEBI" id="CHEBI:15377"/>
        <dbReference type="ChEBI" id="CHEBI:28938"/>
        <dbReference type="ChEBI" id="CHEBI:57845"/>
        <dbReference type="ChEBI" id="CHEBI:58126"/>
        <dbReference type="EC" id="2.5.1.61"/>
    </reaction>
</comment>
<comment type="cofactor">
    <cofactor evidence="1">
        <name>dipyrromethane</name>
        <dbReference type="ChEBI" id="CHEBI:60342"/>
    </cofactor>
    <text evidence="1">Binds 1 dipyrromethane group covalently.</text>
</comment>
<comment type="pathway">
    <text evidence="1">Porphyrin-containing compound metabolism; protoporphyrin-IX biosynthesis; coproporphyrinogen-III from 5-aminolevulinate: step 2/4.</text>
</comment>
<comment type="subunit">
    <text evidence="1">Monomer.</text>
</comment>
<comment type="miscellaneous">
    <text evidence="1">The porphobilinogen subunits are added to the dipyrromethane group.</text>
</comment>
<comment type="similarity">
    <text evidence="1">Belongs to the HMBS family.</text>
</comment>
<feature type="chain" id="PRO_1000078628" description="Porphobilinogen deaminase">
    <location>
        <begin position="1"/>
        <end position="308"/>
    </location>
</feature>
<feature type="modified residue" description="S-(dipyrrolylmethanemethyl)cysteine" evidence="1">
    <location>
        <position position="241"/>
    </location>
</feature>
<organism>
    <name type="scientific">Staphylococcus aureus (strain USA300 / TCH1516)</name>
    <dbReference type="NCBI Taxonomy" id="451516"/>
    <lineage>
        <taxon>Bacteria</taxon>
        <taxon>Bacillati</taxon>
        <taxon>Bacillota</taxon>
        <taxon>Bacilli</taxon>
        <taxon>Bacillales</taxon>
        <taxon>Staphylococcaceae</taxon>
        <taxon>Staphylococcus</taxon>
    </lineage>
</organism>
<dbReference type="EC" id="2.5.1.61" evidence="1"/>
<dbReference type="EMBL" id="CP000730">
    <property type="protein sequence ID" value="ABX29669.1"/>
    <property type="molecule type" value="Genomic_DNA"/>
</dbReference>
<dbReference type="RefSeq" id="WP_001230228.1">
    <property type="nucleotide sequence ID" value="NC_010079.1"/>
</dbReference>
<dbReference type="SMR" id="A8Z2J1"/>
<dbReference type="KEGG" id="sax:USA300HOU_1662"/>
<dbReference type="HOGENOM" id="CLU_019704_0_2_9"/>
<dbReference type="UniPathway" id="UPA00251">
    <property type="reaction ID" value="UER00319"/>
</dbReference>
<dbReference type="GO" id="GO:0005737">
    <property type="term" value="C:cytoplasm"/>
    <property type="evidence" value="ECO:0007669"/>
    <property type="project" value="TreeGrafter"/>
</dbReference>
<dbReference type="GO" id="GO:0004418">
    <property type="term" value="F:hydroxymethylbilane synthase activity"/>
    <property type="evidence" value="ECO:0007669"/>
    <property type="project" value="UniProtKB-UniRule"/>
</dbReference>
<dbReference type="GO" id="GO:0006782">
    <property type="term" value="P:protoporphyrinogen IX biosynthetic process"/>
    <property type="evidence" value="ECO:0007669"/>
    <property type="project" value="UniProtKB-UniRule"/>
</dbReference>
<dbReference type="CDD" id="cd13646">
    <property type="entry name" value="PBP2_EcHMBS_like"/>
    <property type="match status" value="1"/>
</dbReference>
<dbReference type="FunFam" id="3.30.160.40:FF:000001">
    <property type="entry name" value="Porphobilinogen deaminase"/>
    <property type="match status" value="1"/>
</dbReference>
<dbReference type="FunFam" id="3.40.190.10:FF:000004">
    <property type="entry name" value="Porphobilinogen deaminase"/>
    <property type="match status" value="1"/>
</dbReference>
<dbReference type="FunFam" id="3.40.190.10:FF:000005">
    <property type="entry name" value="Porphobilinogen deaminase"/>
    <property type="match status" value="1"/>
</dbReference>
<dbReference type="Gene3D" id="3.40.190.10">
    <property type="entry name" value="Periplasmic binding protein-like II"/>
    <property type="match status" value="2"/>
</dbReference>
<dbReference type="Gene3D" id="3.30.160.40">
    <property type="entry name" value="Porphobilinogen deaminase, C-terminal domain"/>
    <property type="match status" value="1"/>
</dbReference>
<dbReference type="HAMAP" id="MF_00260">
    <property type="entry name" value="Porphobil_deam"/>
    <property type="match status" value="1"/>
</dbReference>
<dbReference type="InterPro" id="IPR000860">
    <property type="entry name" value="HemC"/>
</dbReference>
<dbReference type="InterPro" id="IPR022419">
    <property type="entry name" value="Porphobilin_deaminase_cofac_BS"/>
</dbReference>
<dbReference type="InterPro" id="IPR022417">
    <property type="entry name" value="Porphobilin_deaminase_N"/>
</dbReference>
<dbReference type="InterPro" id="IPR022418">
    <property type="entry name" value="Porphobilinogen_deaminase_C"/>
</dbReference>
<dbReference type="InterPro" id="IPR036803">
    <property type="entry name" value="Porphobilinogen_deaminase_C_sf"/>
</dbReference>
<dbReference type="NCBIfam" id="TIGR00212">
    <property type="entry name" value="hemC"/>
    <property type="match status" value="1"/>
</dbReference>
<dbReference type="PANTHER" id="PTHR11557">
    <property type="entry name" value="PORPHOBILINOGEN DEAMINASE"/>
    <property type="match status" value="1"/>
</dbReference>
<dbReference type="PANTHER" id="PTHR11557:SF0">
    <property type="entry name" value="PORPHOBILINOGEN DEAMINASE"/>
    <property type="match status" value="1"/>
</dbReference>
<dbReference type="Pfam" id="PF01379">
    <property type="entry name" value="Porphobil_deam"/>
    <property type="match status" value="1"/>
</dbReference>
<dbReference type="Pfam" id="PF03900">
    <property type="entry name" value="Porphobil_deamC"/>
    <property type="match status" value="1"/>
</dbReference>
<dbReference type="PIRSF" id="PIRSF001438">
    <property type="entry name" value="4pyrrol_synth_OHMeBilane_synth"/>
    <property type="match status" value="1"/>
</dbReference>
<dbReference type="PRINTS" id="PR00151">
    <property type="entry name" value="PORPHBDMNASE"/>
</dbReference>
<dbReference type="SUPFAM" id="SSF53850">
    <property type="entry name" value="Periplasmic binding protein-like II"/>
    <property type="match status" value="1"/>
</dbReference>
<dbReference type="SUPFAM" id="SSF54782">
    <property type="entry name" value="Porphobilinogen deaminase (hydroxymethylbilane synthase), C-terminal domain"/>
    <property type="match status" value="1"/>
</dbReference>
<dbReference type="PROSITE" id="PS00533">
    <property type="entry name" value="PORPHOBILINOGEN_DEAM"/>
    <property type="match status" value="1"/>
</dbReference>
<accession>A8Z2J1</accession>
<sequence length="308" mass="34354">MRKLVVGSRRSKLALTQSQQFIDKLKAVEPNLEIEIKEIVTKGDRIVDKQLSKVGGKGLFVKEIQHELFEKNIDMAIHSLKDVPSVIPEGLTLGCIPDRELPFDAYISKTHTPLSQLPEGSIIGTSSLRRGAQILSKYPNLEIKWIRGNIDTRLEKLQTEDYDAIILAAAGLRRMGWSDDIVTSYLDRDTLLPAIGQGALGIECRSDDEELLTLLSKVHNDEVAKCVTAERTFLAEMDGSCQVPIAGYATISDQNEIEFTGLIMTPDGKERFEYTMNGTDPVELGKTVSNKLKEQGAYEIIKRLNEQH</sequence>
<keyword id="KW-0627">Porphyrin biosynthesis</keyword>
<keyword id="KW-0808">Transferase</keyword>
<proteinExistence type="inferred from homology"/>